<name>PG135_VACCC</name>
<feature type="signal peptide" evidence="2">
    <location>
        <begin position="1"/>
        <end position="22"/>
    </location>
</feature>
<feature type="chain" id="PRO_0000099226" description="Virion membrane protein OPG135">
    <location>
        <begin position="23"/>
        <end position="99"/>
    </location>
</feature>
<feature type="topological domain" description="Intravirion" evidence="2">
    <location>
        <begin position="23"/>
        <end position="45"/>
    </location>
</feature>
<feature type="transmembrane region" description="Helical" evidence="2">
    <location>
        <begin position="46"/>
        <end position="66"/>
    </location>
</feature>
<feature type="topological domain" description="Virion surface" evidence="2">
    <location>
        <begin position="67"/>
        <end position="83"/>
    </location>
</feature>
<feature type="region of interest" description="Disordered" evidence="3">
    <location>
        <begin position="73"/>
        <end position="99"/>
    </location>
</feature>
<feature type="compositionally biased region" description="Basic and acidic residues" evidence="3">
    <location>
        <begin position="73"/>
        <end position="89"/>
    </location>
</feature>
<feature type="compositionally biased region" description="Polar residues" evidence="3">
    <location>
        <begin position="90"/>
        <end position="99"/>
    </location>
</feature>
<feature type="glycosylation site" description="N-linked (GlcNAc...) asparagine; by host" evidence="2">
    <location>
        <position position="88"/>
    </location>
</feature>
<keyword id="KW-0325">Glycoprotein</keyword>
<keyword id="KW-1035">Host cytoplasm</keyword>
<keyword id="KW-0426">Late protein</keyword>
<keyword id="KW-0472">Membrane</keyword>
<keyword id="KW-1185">Reference proteome</keyword>
<keyword id="KW-0732">Signal</keyword>
<keyword id="KW-0812">Transmembrane</keyword>
<keyword id="KW-1133">Transmembrane helix</keyword>
<keyword id="KW-0261">Viral envelope protein</keyword>
<keyword id="KW-0946">Virion</keyword>
<accession>P20987</accession>
<sequence>MSCYTAILKSVGGLALFQVANGAIDLCRHFFMYFCEQKLRPNSFWFVVVRAIASMIMYLVLGIALLYISEQDDKKNTNNDGSNNDKRNESSINSNSSPK</sequence>
<evidence type="ECO:0000250" key="1">
    <source>
        <dbReference type="UniProtKB" id="Q85320"/>
    </source>
</evidence>
<evidence type="ECO:0000255" key="2"/>
<evidence type="ECO:0000256" key="3">
    <source>
        <dbReference type="SAM" id="MobiDB-lite"/>
    </source>
</evidence>
<evidence type="ECO:0000305" key="4"/>
<dbReference type="EMBL" id="M35027">
    <property type="protein sequence ID" value="AAA48128.1"/>
    <property type="molecule type" value="Genomic_DNA"/>
</dbReference>
<dbReference type="PIR" id="B42518">
    <property type="entry name" value="B42518"/>
</dbReference>
<dbReference type="SMR" id="P20987"/>
<dbReference type="Proteomes" id="UP000008269">
    <property type="component" value="Segment"/>
</dbReference>
<dbReference type="GO" id="GO:0030430">
    <property type="term" value="C:host cell cytoplasm"/>
    <property type="evidence" value="ECO:0007669"/>
    <property type="project" value="UniProtKB-SubCell"/>
</dbReference>
<dbReference type="GO" id="GO:0016020">
    <property type="term" value="C:membrane"/>
    <property type="evidence" value="ECO:0007669"/>
    <property type="project" value="UniProtKB-KW"/>
</dbReference>
<dbReference type="GO" id="GO:0019031">
    <property type="term" value="C:viral envelope"/>
    <property type="evidence" value="ECO:0007669"/>
    <property type="project" value="UniProtKB-KW"/>
</dbReference>
<dbReference type="GO" id="GO:0055036">
    <property type="term" value="C:virion membrane"/>
    <property type="evidence" value="ECO:0007669"/>
    <property type="project" value="UniProtKB-SubCell"/>
</dbReference>
<dbReference type="InterPro" id="IPR006920">
    <property type="entry name" value="Poxvirus_A9"/>
</dbReference>
<dbReference type="Pfam" id="PF04835">
    <property type="entry name" value="Pox_A9"/>
    <property type="match status" value="1"/>
</dbReference>
<reference key="1">
    <citation type="journal article" date="1990" name="Virology">
        <title>The complete DNA sequence of vaccinia virus.</title>
        <authorList>
            <person name="Goebel S.J."/>
            <person name="Johnson G.P."/>
            <person name="Perkus M.E."/>
            <person name="Davis S.W."/>
            <person name="Winslow J.P."/>
            <person name="Paoletti E."/>
        </authorList>
    </citation>
    <scope>NUCLEOTIDE SEQUENCE [LARGE SCALE GENOMIC DNA]</scope>
</reference>
<reference key="2">
    <citation type="journal article" date="1990" name="Virology">
        <title>Appendix to 'The complete DNA sequence of vaccinia virus'.</title>
        <authorList>
            <person name="Goebel S.J."/>
            <person name="Johnson G.P."/>
            <person name="Perkus M.E."/>
            <person name="Davis S.W."/>
            <person name="Winslow J.P."/>
            <person name="Paoletti E."/>
        </authorList>
    </citation>
    <scope>NUCLEOTIDE SEQUENCE [LARGE SCALE GENOMIC DNA]</scope>
</reference>
<protein>
    <recommendedName>
        <fullName>Virion membrane protein OPG135</fullName>
    </recommendedName>
</protein>
<organismHost>
    <name type="scientific">Homo sapiens</name>
    <name type="common">Human</name>
    <dbReference type="NCBI Taxonomy" id="9606"/>
</organismHost>
<proteinExistence type="evidence at transcript level"/>
<comment type="function">
    <text evidence="1">Envelope protein. Required for an early step in virion morphogenesis.</text>
</comment>
<comment type="subcellular location">
    <subcellularLocation>
        <location evidence="1">Virion membrane</location>
        <topology evidence="1">Single-pass membrane protein</topology>
    </subcellularLocation>
    <subcellularLocation>
        <location evidence="1">Host cytoplasm</location>
    </subcellularLocation>
    <text evidence="1">Component of the mature virion (MV) membrane. The mature virion is located in the cytoplasm of infected cells and is probably released by cell lysis. Also found in cytoplasmic virus factories.</text>
</comment>
<comment type="induction">
    <text>Expressed in the late phase of the viral replicative cycle.</text>
</comment>
<comment type="similarity">
    <text evidence="4">Belongs to the oerthopoxvirus OPG135 family.</text>
</comment>
<gene>
    <name type="primary">OPG135</name>
    <name type="ORF">A9L</name>
</gene>
<organism>
    <name type="scientific">Vaccinia virus (strain Copenhagen)</name>
    <name type="common">VACV</name>
    <dbReference type="NCBI Taxonomy" id="10249"/>
    <lineage>
        <taxon>Viruses</taxon>
        <taxon>Varidnaviria</taxon>
        <taxon>Bamfordvirae</taxon>
        <taxon>Nucleocytoviricota</taxon>
        <taxon>Pokkesviricetes</taxon>
        <taxon>Chitovirales</taxon>
        <taxon>Poxviridae</taxon>
        <taxon>Chordopoxvirinae</taxon>
        <taxon>Orthopoxvirus</taxon>
        <taxon>Vaccinia virus</taxon>
    </lineage>
</organism>